<reference key="1">
    <citation type="submission" date="2009-03" db="EMBL/GenBank/DDBJ databases">
        <title>Brucella melitensis ATCC 23457 whole genome shotgun sequencing project.</title>
        <authorList>
            <person name="Setubal J.C."/>
            <person name="Boyle S."/>
            <person name="Crasta O.R."/>
            <person name="Gillespie J.J."/>
            <person name="Kenyon R.W."/>
            <person name="Lu J."/>
            <person name="Mane S."/>
            <person name="Nagrani S."/>
            <person name="Shallom J.M."/>
            <person name="Shallom S."/>
            <person name="Shukla M."/>
            <person name="Snyder E.E."/>
            <person name="Sobral B.W."/>
            <person name="Wattam A.R."/>
            <person name="Will R."/>
            <person name="Williams K."/>
            <person name="Yoo H."/>
            <person name="Munk C."/>
            <person name="Tapia R."/>
            <person name="Han C."/>
            <person name="Detter J.C."/>
            <person name="Bruce D."/>
            <person name="Brettin T.S."/>
        </authorList>
    </citation>
    <scope>NUCLEOTIDE SEQUENCE [LARGE SCALE GENOMIC DNA]</scope>
    <source>
        <strain>ATCC 23457</strain>
    </source>
</reference>
<dbReference type="EC" id="2.5.1.145" evidence="1"/>
<dbReference type="EMBL" id="CP001488">
    <property type="protein sequence ID" value="ACO01285.1"/>
    <property type="molecule type" value="Genomic_DNA"/>
</dbReference>
<dbReference type="RefSeq" id="WP_002966912.1">
    <property type="nucleotide sequence ID" value="NC_012441.1"/>
</dbReference>
<dbReference type="SMR" id="C0REG3"/>
<dbReference type="GeneID" id="97533286"/>
<dbReference type="KEGG" id="bmi:BMEA_A1582"/>
<dbReference type="HOGENOM" id="CLU_013386_1_0_5"/>
<dbReference type="UniPathway" id="UPA00664"/>
<dbReference type="Proteomes" id="UP000001748">
    <property type="component" value="Chromosome I"/>
</dbReference>
<dbReference type="GO" id="GO:0005886">
    <property type="term" value="C:plasma membrane"/>
    <property type="evidence" value="ECO:0007669"/>
    <property type="project" value="UniProtKB-SubCell"/>
</dbReference>
<dbReference type="GO" id="GO:0008961">
    <property type="term" value="F:phosphatidylglycerol-prolipoprotein diacylglyceryl transferase activity"/>
    <property type="evidence" value="ECO:0007669"/>
    <property type="project" value="UniProtKB-UniRule"/>
</dbReference>
<dbReference type="GO" id="GO:0042158">
    <property type="term" value="P:lipoprotein biosynthetic process"/>
    <property type="evidence" value="ECO:0007669"/>
    <property type="project" value="UniProtKB-UniRule"/>
</dbReference>
<dbReference type="HAMAP" id="MF_01147">
    <property type="entry name" value="Lgt"/>
    <property type="match status" value="1"/>
</dbReference>
<dbReference type="InterPro" id="IPR001640">
    <property type="entry name" value="Lgt"/>
</dbReference>
<dbReference type="NCBIfam" id="TIGR00544">
    <property type="entry name" value="lgt"/>
    <property type="match status" value="1"/>
</dbReference>
<dbReference type="PANTHER" id="PTHR30589:SF0">
    <property type="entry name" value="PHOSPHATIDYLGLYCEROL--PROLIPOPROTEIN DIACYLGLYCERYL TRANSFERASE"/>
    <property type="match status" value="1"/>
</dbReference>
<dbReference type="PANTHER" id="PTHR30589">
    <property type="entry name" value="PROLIPOPROTEIN DIACYLGLYCERYL TRANSFERASE"/>
    <property type="match status" value="1"/>
</dbReference>
<dbReference type="Pfam" id="PF01790">
    <property type="entry name" value="LGT"/>
    <property type="match status" value="1"/>
</dbReference>
<proteinExistence type="inferred from homology"/>
<gene>
    <name evidence="1" type="primary">lgt</name>
    <name type="ordered locus">BMEA_A1582</name>
</gene>
<sequence>MIETLLPASALAFPAIDPVIFRVGPLAVHWYGLGYVVGILFAWWYGKKLLRSHRLWANNQPPMAPEALDDFVIWAALGVVLGGRIGYVLFYNFSYYISNPLAIPALWDGGMSFHGGILGTTLAMILFARSRGILVWSMFDTIAAGVPIGLGVVRVANFINSELWGRVSDVPWAVYFPNGGPLPRHPSQLYEAFLEGLVLFFVLFVLVWGARKLKQPGFVAGAFVTGYGLSRIAVEFFREPDAQIGYLFGGWLTMGMVLSVPMVLLGLWAMWRANRAAARNA</sequence>
<name>LGT_BRUMB</name>
<protein>
    <recommendedName>
        <fullName evidence="1">Phosphatidylglycerol--prolipoprotein diacylglyceryl transferase</fullName>
        <ecNumber evidence="1">2.5.1.145</ecNumber>
    </recommendedName>
</protein>
<feature type="chain" id="PRO_1000164127" description="Phosphatidylglycerol--prolipoprotein diacylglyceryl transferase">
    <location>
        <begin position="1"/>
        <end position="281"/>
    </location>
</feature>
<feature type="transmembrane region" description="Helical" evidence="1">
    <location>
        <begin position="23"/>
        <end position="43"/>
    </location>
</feature>
<feature type="transmembrane region" description="Helical" evidence="1">
    <location>
        <begin position="71"/>
        <end position="91"/>
    </location>
</feature>
<feature type="transmembrane region" description="Helical" evidence="1">
    <location>
        <begin position="107"/>
        <end position="127"/>
    </location>
</feature>
<feature type="transmembrane region" description="Helical" evidence="1">
    <location>
        <begin position="133"/>
        <end position="153"/>
    </location>
</feature>
<feature type="transmembrane region" description="Helical" evidence="1">
    <location>
        <begin position="189"/>
        <end position="209"/>
    </location>
</feature>
<feature type="transmembrane region" description="Helical" evidence="1">
    <location>
        <begin position="217"/>
        <end position="237"/>
    </location>
</feature>
<feature type="transmembrane region" description="Helical" evidence="1">
    <location>
        <begin position="247"/>
        <end position="267"/>
    </location>
</feature>
<feature type="binding site" evidence="1">
    <location>
        <position position="154"/>
    </location>
    <ligand>
        <name>a 1,2-diacyl-sn-glycero-3-phospho-(1'-sn-glycerol)</name>
        <dbReference type="ChEBI" id="CHEBI:64716"/>
    </ligand>
</feature>
<organism>
    <name type="scientific">Brucella melitensis biotype 2 (strain ATCC 23457)</name>
    <dbReference type="NCBI Taxonomy" id="546272"/>
    <lineage>
        <taxon>Bacteria</taxon>
        <taxon>Pseudomonadati</taxon>
        <taxon>Pseudomonadota</taxon>
        <taxon>Alphaproteobacteria</taxon>
        <taxon>Hyphomicrobiales</taxon>
        <taxon>Brucellaceae</taxon>
        <taxon>Brucella/Ochrobactrum group</taxon>
        <taxon>Brucella</taxon>
    </lineage>
</organism>
<comment type="function">
    <text evidence="1">Catalyzes the transfer of the diacylglyceryl group from phosphatidylglycerol to the sulfhydryl group of the N-terminal cysteine of a prolipoprotein, the first step in the formation of mature lipoproteins.</text>
</comment>
<comment type="catalytic activity">
    <reaction evidence="1">
        <text>L-cysteinyl-[prolipoprotein] + a 1,2-diacyl-sn-glycero-3-phospho-(1'-sn-glycerol) = an S-1,2-diacyl-sn-glyceryl-L-cysteinyl-[prolipoprotein] + sn-glycerol 1-phosphate + H(+)</text>
        <dbReference type="Rhea" id="RHEA:56712"/>
        <dbReference type="Rhea" id="RHEA-COMP:14679"/>
        <dbReference type="Rhea" id="RHEA-COMP:14680"/>
        <dbReference type="ChEBI" id="CHEBI:15378"/>
        <dbReference type="ChEBI" id="CHEBI:29950"/>
        <dbReference type="ChEBI" id="CHEBI:57685"/>
        <dbReference type="ChEBI" id="CHEBI:64716"/>
        <dbReference type="ChEBI" id="CHEBI:140658"/>
        <dbReference type="EC" id="2.5.1.145"/>
    </reaction>
</comment>
<comment type="pathway">
    <text evidence="1">Protein modification; lipoprotein biosynthesis (diacylglyceryl transfer).</text>
</comment>
<comment type="subcellular location">
    <subcellularLocation>
        <location evidence="1">Cell inner membrane</location>
        <topology evidence="1">Multi-pass membrane protein</topology>
    </subcellularLocation>
</comment>
<comment type="similarity">
    <text evidence="1">Belongs to the Lgt family.</text>
</comment>
<evidence type="ECO:0000255" key="1">
    <source>
        <dbReference type="HAMAP-Rule" id="MF_01147"/>
    </source>
</evidence>
<keyword id="KW-0997">Cell inner membrane</keyword>
<keyword id="KW-1003">Cell membrane</keyword>
<keyword id="KW-0472">Membrane</keyword>
<keyword id="KW-0808">Transferase</keyword>
<keyword id="KW-0812">Transmembrane</keyword>
<keyword id="KW-1133">Transmembrane helix</keyword>
<accession>C0REG3</accession>